<keyword id="KW-0066">ATP synthesis</keyword>
<keyword id="KW-0997">Cell inner membrane</keyword>
<keyword id="KW-1003">Cell membrane</keyword>
<keyword id="KW-0139">CF(1)</keyword>
<keyword id="KW-0375">Hydrogen ion transport</keyword>
<keyword id="KW-0406">Ion transport</keyword>
<keyword id="KW-0472">Membrane</keyword>
<keyword id="KW-1185">Reference proteome</keyword>
<keyword id="KW-0813">Transport</keyword>
<protein>
    <recommendedName>
        <fullName evidence="1">ATP synthase epsilon chain</fullName>
    </recommendedName>
    <alternativeName>
        <fullName evidence="1">ATP synthase F1 sector epsilon subunit</fullName>
    </alternativeName>
    <alternativeName>
        <fullName evidence="1">F-ATPase epsilon subunit</fullName>
    </alternativeName>
</protein>
<dbReference type="EMBL" id="CP000544">
    <property type="protein sequence ID" value="ABM63192.1"/>
    <property type="molecule type" value="Genomic_DNA"/>
</dbReference>
<dbReference type="RefSeq" id="WP_011815214.1">
    <property type="nucleotide sequence ID" value="NC_008789.1"/>
</dbReference>
<dbReference type="SMR" id="A1WZT0"/>
<dbReference type="STRING" id="349124.Hhal_2429"/>
<dbReference type="KEGG" id="hha:Hhal_2429"/>
<dbReference type="eggNOG" id="COG0355">
    <property type="taxonomic scope" value="Bacteria"/>
</dbReference>
<dbReference type="HOGENOM" id="CLU_084338_2_0_6"/>
<dbReference type="OrthoDB" id="9791445at2"/>
<dbReference type="Proteomes" id="UP000000647">
    <property type="component" value="Chromosome"/>
</dbReference>
<dbReference type="GO" id="GO:0005886">
    <property type="term" value="C:plasma membrane"/>
    <property type="evidence" value="ECO:0007669"/>
    <property type="project" value="UniProtKB-SubCell"/>
</dbReference>
<dbReference type="GO" id="GO:0045259">
    <property type="term" value="C:proton-transporting ATP synthase complex"/>
    <property type="evidence" value="ECO:0007669"/>
    <property type="project" value="UniProtKB-KW"/>
</dbReference>
<dbReference type="GO" id="GO:0005524">
    <property type="term" value="F:ATP binding"/>
    <property type="evidence" value="ECO:0007669"/>
    <property type="project" value="UniProtKB-UniRule"/>
</dbReference>
<dbReference type="GO" id="GO:0046933">
    <property type="term" value="F:proton-transporting ATP synthase activity, rotational mechanism"/>
    <property type="evidence" value="ECO:0007669"/>
    <property type="project" value="UniProtKB-UniRule"/>
</dbReference>
<dbReference type="CDD" id="cd12152">
    <property type="entry name" value="F1-ATPase_delta"/>
    <property type="match status" value="1"/>
</dbReference>
<dbReference type="FunFam" id="1.20.5.440:FF:000001">
    <property type="entry name" value="ATP synthase epsilon chain"/>
    <property type="match status" value="1"/>
</dbReference>
<dbReference type="FunFam" id="2.60.15.10:FF:000001">
    <property type="entry name" value="ATP synthase epsilon chain"/>
    <property type="match status" value="1"/>
</dbReference>
<dbReference type="Gene3D" id="1.20.5.440">
    <property type="entry name" value="ATP synthase delta/epsilon subunit, C-terminal domain"/>
    <property type="match status" value="1"/>
</dbReference>
<dbReference type="Gene3D" id="2.60.15.10">
    <property type="entry name" value="F0F1 ATP synthase delta/epsilon subunit, N-terminal"/>
    <property type="match status" value="1"/>
</dbReference>
<dbReference type="HAMAP" id="MF_00530">
    <property type="entry name" value="ATP_synth_epsil_bac"/>
    <property type="match status" value="1"/>
</dbReference>
<dbReference type="InterPro" id="IPR036794">
    <property type="entry name" value="ATP_F1_dsu/esu_C_sf"/>
</dbReference>
<dbReference type="InterPro" id="IPR001469">
    <property type="entry name" value="ATP_synth_F1_dsu/esu"/>
</dbReference>
<dbReference type="InterPro" id="IPR020546">
    <property type="entry name" value="ATP_synth_F1_dsu/esu_N"/>
</dbReference>
<dbReference type="InterPro" id="IPR020547">
    <property type="entry name" value="ATP_synth_F1_esu_C"/>
</dbReference>
<dbReference type="InterPro" id="IPR036771">
    <property type="entry name" value="ATPsynth_dsu/esu_N"/>
</dbReference>
<dbReference type="NCBIfam" id="TIGR01216">
    <property type="entry name" value="ATP_synt_epsi"/>
    <property type="match status" value="1"/>
</dbReference>
<dbReference type="NCBIfam" id="NF001847">
    <property type="entry name" value="PRK00571.1-4"/>
    <property type="match status" value="1"/>
</dbReference>
<dbReference type="NCBIfam" id="NF009977">
    <property type="entry name" value="PRK13442.1"/>
    <property type="match status" value="1"/>
</dbReference>
<dbReference type="PANTHER" id="PTHR13822">
    <property type="entry name" value="ATP SYNTHASE DELTA/EPSILON CHAIN"/>
    <property type="match status" value="1"/>
</dbReference>
<dbReference type="PANTHER" id="PTHR13822:SF10">
    <property type="entry name" value="ATP SYNTHASE EPSILON CHAIN, CHLOROPLASTIC"/>
    <property type="match status" value="1"/>
</dbReference>
<dbReference type="Pfam" id="PF00401">
    <property type="entry name" value="ATP-synt_DE"/>
    <property type="match status" value="1"/>
</dbReference>
<dbReference type="Pfam" id="PF02823">
    <property type="entry name" value="ATP-synt_DE_N"/>
    <property type="match status" value="1"/>
</dbReference>
<dbReference type="SUPFAM" id="SSF46604">
    <property type="entry name" value="Epsilon subunit of F1F0-ATP synthase C-terminal domain"/>
    <property type="match status" value="1"/>
</dbReference>
<dbReference type="SUPFAM" id="SSF51344">
    <property type="entry name" value="Epsilon subunit of F1F0-ATP synthase N-terminal domain"/>
    <property type="match status" value="1"/>
</dbReference>
<gene>
    <name evidence="1" type="primary">atpC</name>
    <name type="ordered locus">Hhal_2429</name>
</gene>
<organism>
    <name type="scientific">Halorhodospira halophila (strain DSM 244 / SL1)</name>
    <name type="common">Ectothiorhodospira halophila (strain DSM 244 / SL1)</name>
    <dbReference type="NCBI Taxonomy" id="349124"/>
    <lineage>
        <taxon>Bacteria</taxon>
        <taxon>Pseudomonadati</taxon>
        <taxon>Pseudomonadota</taxon>
        <taxon>Gammaproteobacteria</taxon>
        <taxon>Chromatiales</taxon>
        <taxon>Ectothiorhodospiraceae</taxon>
        <taxon>Halorhodospira</taxon>
    </lineage>
</organism>
<proteinExistence type="inferred from homology"/>
<accession>A1WZT0</accession>
<sequence>MSTLQVDIVSAEEQLYAGQASMVIAPAAEGDVGIAPRHAPLLTRLRPGELRITPEGDEEEFFFYASGGLLEVQPHKVTVLADTAVRARDIDEAAALEAKRRAEEKLREQKDEVDYSSVQAELAEAMAQLRTLESLRKRAKR</sequence>
<name>ATPE_HALHL</name>
<comment type="function">
    <text evidence="1">Produces ATP from ADP in the presence of a proton gradient across the membrane.</text>
</comment>
<comment type="subunit">
    <text evidence="1">F-type ATPases have 2 components, CF(1) - the catalytic core - and CF(0) - the membrane proton channel. CF(1) has five subunits: alpha(3), beta(3), gamma(1), delta(1), epsilon(1). CF(0) has three main subunits: a, b and c.</text>
</comment>
<comment type="subcellular location">
    <subcellularLocation>
        <location evidence="1">Cell inner membrane</location>
        <topology evidence="1">Peripheral membrane protein</topology>
    </subcellularLocation>
</comment>
<comment type="similarity">
    <text evidence="1">Belongs to the ATPase epsilon chain family.</text>
</comment>
<reference key="1">
    <citation type="submission" date="2006-12" db="EMBL/GenBank/DDBJ databases">
        <title>Complete sequence of Halorhodospira halophila SL1.</title>
        <authorList>
            <consortium name="US DOE Joint Genome Institute"/>
            <person name="Copeland A."/>
            <person name="Lucas S."/>
            <person name="Lapidus A."/>
            <person name="Barry K."/>
            <person name="Detter J.C."/>
            <person name="Glavina del Rio T."/>
            <person name="Hammon N."/>
            <person name="Israni S."/>
            <person name="Dalin E."/>
            <person name="Tice H."/>
            <person name="Pitluck S."/>
            <person name="Saunders E."/>
            <person name="Brettin T."/>
            <person name="Bruce D."/>
            <person name="Han C."/>
            <person name="Tapia R."/>
            <person name="Schmutz J."/>
            <person name="Larimer F."/>
            <person name="Land M."/>
            <person name="Hauser L."/>
            <person name="Kyrpides N."/>
            <person name="Mikhailova N."/>
            <person name="Hoff W."/>
            <person name="Richardson P."/>
        </authorList>
    </citation>
    <scope>NUCLEOTIDE SEQUENCE [LARGE SCALE GENOMIC DNA]</scope>
    <source>
        <strain>DSM 244 / SL1</strain>
    </source>
</reference>
<feature type="chain" id="PRO_1000056488" description="ATP synthase epsilon chain">
    <location>
        <begin position="1"/>
        <end position="141"/>
    </location>
</feature>
<evidence type="ECO:0000255" key="1">
    <source>
        <dbReference type="HAMAP-Rule" id="MF_00530"/>
    </source>
</evidence>